<name>TPA_EUPCP</name>
<evidence type="ECO:0000255" key="1"/>
<evidence type="ECO:0000269" key="2">
    <source ref="1"/>
</evidence>
<evidence type="ECO:0000303" key="3">
    <source ref="1"/>
</evidence>
<evidence type="ECO:0000305" key="4"/>
<evidence type="ECO:0000305" key="5">
    <source ref="1"/>
</evidence>
<sequence>FLPGLLAGLL</sequence>
<feature type="peptide" id="PRO_0000422918" description="Temporin-ECa" evidence="3">
    <location>
        <begin position="1"/>
        <end position="10"/>
    </location>
</feature>
<reference evidence="4" key="1">
    <citation type="journal article" date="2012" name="Int. J. Pept. Res. Ther.">
        <title>Identification and characterization of novel antibacterial peptides from skin secretions of Euphlyctis cyanophlyctis.</title>
        <authorList>
            <person name="Asoodeh A."/>
            <person name="Ghorani-Azam A."/>
            <person name="Chamani J.K."/>
        </authorList>
    </citation>
    <scope>PROTEIN SEQUENCE</scope>
    <scope>FUNCTION</scope>
    <scope>SUBCELLULAR LOCATION</scope>
    <scope>MASS SPECTROMETRY</scope>
    <source>
        <tissue evidence="2">Skin secretion</tissue>
    </source>
</reference>
<protein>
    <recommendedName>
        <fullName evidence="3">Temporin-ECa</fullName>
    </recommendedName>
</protein>
<organism>
    <name type="scientific">Euphlyctis cyanophlyctis</name>
    <name type="common">Skittering frog</name>
    <dbReference type="NCBI Taxonomy" id="58519"/>
    <lineage>
        <taxon>Eukaryota</taxon>
        <taxon>Metazoa</taxon>
        <taxon>Chordata</taxon>
        <taxon>Craniata</taxon>
        <taxon>Vertebrata</taxon>
        <taxon>Euteleostomi</taxon>
        <taxon>Amphibia</taxon>
        <taxon>Batrachia</taxon>
        <taxon>Anura</taxon>
        <taxon>Neobatrachia</taxon>
        <taxon>Ranoidea</taxon>
        <taxon>Dicroglossidae</taxon>
        <taxon>Dicroglossinae</taxon>
        <taxon>Euphlyctis</taxon>
    </lineage>
</organism>
<comment type="function">
    <text evidence="2">Has antibacterial activity against E.coli HP101BA (MIC=12.3 uM), K.pneumoniae PTCC1388 (MIC=9.8 uM), M.luteus PTCC1625 (MIC=8.3 uM) and S.aureus PTCC1431 (MIC=10.6 uM). Has no or very limited (&lt;3%) hemolytic activity at concentrations of 15 ug/ml and 60 ug/ml, respectively.</text>
</comment>
<comment type="subcellular location">
    <subcellularLocation>
        <location evidence="2">Secreted</location>
    </subcellularLocation>
</comment>
<comment type="tissue specificity">
    <text evidence="5">Expressed by the skin glands.</text>
</comment>
<comment type="mass spectrometry"/>
<comment type="similarity">
    <text evidence="1">Belongs to the frog skin active peptide (FSAP) family. Temporin subfamily.</text>
</comment>
<proteinExistence type="evidence at protein level"/>
<dbReference type="GO" id="GO:0005576">
    <property type="term" value="C:extracellular region"/>
    <property type="evidence" value="ECO:0007669"/>
    <property type="project" value="UniProtKB-SubCell"/>
</dbReference>
<dbReference type="GO" id="GO:0042742">
    <property type="term" value="P:defense response to bacterium"/>
    <property type="evidence" value="ECO:0007669"/>
    <property type="project" value="UniProtKB-KW"/>
</dbReference>
<accession>C0HJB9</accession>
<keyword id="KW-0878">Amphibian defense peptide</keyword>
<keyword id="KW-0044">Antibiotic</keyword>
<keyword id="KW-0929">Antimicrobial</keyword>
<keyword id="KW-0903">Direct protein sequencing</keyword>
<keyword id="KW-0964">Secreted</keyword>